<accession>Q6P5W5</accession>
<accession>Q7L5S5</accession>
<accession>Q9H6T8</accession>
<accession>Q9NXC4</accession>
<feature type="signal peptide" evidence="4">
    <location>
        <begin position="1"/>
        <end position="22"/>
    </location>
</feature>
<feature type="chain" id="PRO_0000042620" description="Zinc transporter ZIP4">
    <location>
        <begin position="23"/>
        <end position="647"/>
    </location>
</feature>
<feature type="topological domain" description="Extracellular" evidence="26">
    <location>
        <begin position="23"/>
        <end position="327"/>
    </location>
</feature>
<feature type="transmembrane region" description="Helical; Name=1" evidence="1">
    <location>
        <begin position="328"/>
        <end position="348"/>
    </location>
</feature>
<feature type="topological domain" description="Cytoplasmic" evidence="26">
    <location>
        <begin position="349"/>
        <end position="359"/>
    </location>
</feature>
<feature type="transmembrane region" description="Helical; Name=2" evidence="1">
    <location>
        <begin position="360"/>
        <end position="380"/>
    </location>
</feature>
<feature type="topological domain" description="Extracellular" evidence="26">
    <location>
        <begin position="381"/>
        <end position="402"/>
    </location>
</feature>
<feature type="transmembrane region" description="Helical; Name=3" evidence="1">
    <location>
        <begin position="403"/>
        <end position="423"/>
    </location>
</feature>
<feature type="topological domain" description="Cytoplasmic" evidence="26">
    <location>
        <begin position="424"/>
        <end position="498"/>
    </location>
</feature>
<feature type="transmembrane region" description="Helical; Name=4" evidence="1">
    <location>
        <begin position="499"/>
        <end position="518"/>
    </location>
</feature>
<feature type="topological domain" description="Extracellular" evidence="26">
    <location>
        <begin position="519"/>
        <end position="526"/>
    </location>
</feature>
<feature type="transmembrane region" description="Helical; Name=5" evidence="1">
    <location>
        <begin position="527"/>
        <end position="553"/>
    </location>
</feature>
<feature type="topological domain" description="Cytoplasmic" evidence="26">
    <location>
        <begin position="554"/>
        <end position="558"/>
    </location>
</feature>
<feature type="transmembrane region" description="Helical; Name=6" evidence="1">
    <location>
        <begin position="559"/>
        <end position="579"/>
    </location>
</feature>
<feature type="topological domain" description="Extracellular" evidence="26">
    <location>
        <begin position="580"/>
        <end position="586"/>
    </location>
</feature>
<feature type="transmembrane region" description="Helical; Name=7" evidence="1">
    <location>
        <begin position="587"/>
        <end position="607"/>
    </location>
</feature>
<feature type="topological domain" description="Cytoplasmic" evidence="26">
    <location>
        <begin position="608"/>
        <end position="617"/>
    </location>
</feature>
<feature type="transmembrane region" description="Helical; Name=8" evidence="1">
    <location>
        <begin position="618"/>
        <end position="638"/>
    </location>
</feature>
<feature type="topological domain" description="Extracellular" evidence="26">
    <location>
        <begin position="639"/>
        <end position="647"/>
    </location>
</feature>
<feature type="region of interest" description="Disordered" evidence="5">
    <location>
        <begin position="236"/>
        <end position="255"/>
    </location>
</feature>
<feature type="region of interest" description="Disordered" evidence="5">
    <location>
        <begin position="458"/>
        <end position="484"/>
    </location>
</feature>
<feature type="short sequence motif" description="Essential for SLC39A4 endocytosis" evidence="21">
    <location>
        <begin position="452"/>
        <end position="454"/>
    </location>
</feature>
<feature type="compositionally biased region" description="Basic and acidic residues" evidence="5">
    <location>
        <begin position="460"/>
        <end position="470"/>
    </location>
</feature>
<feature type="binding site" description="M1 metal binding site" evidence="27">
    <location>
        <position position="507"/>
    </location>
    <ligand>
        <name>Zn(2+)</name>
        <dbReference type="ChEBI" id="CHEBI:29105"/>
        <label>1</label>
    </ligand>
</feature>
<feature type="binding site" description="M2 metal binding site" evidence="27">
    <location>
        <position position="508"/>
    </location>
    <ligand>
        <name>Zn(2+)</name>
        <dbReference type="ChEBI" id="CHEBI:29105"/>
        <label>2</label>
    </ligand>
</feature>
<feature type="binding site" description="M1 metal binding site" evidence="27">
    <location>
        <position position="511"/>
    </location>
    <ligand>
        <name>Zn(2+)</name>
        <dbReference type="ChEBI" id="CHEBI:29105"/>
        <label>1</label>
    </ligand>
</feature>
<feature type="binding site" description="M2 metal binding site" evidence="27">
    <location>
        <position position="511"/>
    </location>
    <ligand>
        <name>Zn(2+)</name>
        <dbReference type="ChEBI" id="CHEBI:29105"/>
        <label>2</label>
    </ligand>
</feature>
<feature type="binding site" description="M1 metal binding site" evidence="27">
    <location>
        <position position="536"/>
    </location>
    <ligand>
        <name>Zn(2+)</name>
        <dbReference type="ChEBI" id="CHEBI:29105"/>
        <label>1</label>
    </ligand>
</feature>
<feature type="binding site" description="M2 metal binding site" evidence="27">
    <location>
        <position position="537"/>
    </location>
    <ligand>
        <name>Zn(2+)</name>
        <dbReference type="ChEBI" id="CHEBI:29105"/>
        <label>2</label>
    </ligand>
</feature>
<feature type="binding site" description="M1 metal binding site" evidence="27">
    <location>
        <position position="540"/>
    </location>
    <ligand>
        <name>Zn(2+)</name>
        <dbReference type="ChEBI" id="CHEBI:29105"/>
        <label>1</label>
    </ligand>
</feature>
<feature type="site" description="Essential role in Zn(2+) sensing" evidence="21">
    <location>
        <position position="511"/>
    </location>
</feature>
<feature type="glycosylation site" description="N-linked (GlcNAc...) asparagine" evidence="22">
    <location>
        <position position="261"/>
    </location>
</feature>
<feature type="disulfide bond" evidence="2">
    <location>
        <begin position="57"/>
        <end position="62"/>
    </location>
</feature>
<feature type="disulfide bond" evidence="2">
    <location>
        <begin position="65"/>
        <end position="111"/>
    </location>
</feature>
<feature type="disulfide bond" evidence="2">
    <location>
        <begin position="160"/>
        <end position="195"/>
    </location>
</feature>
<feature type="disulfide bond" evidence="2">
    <location>
        <begin position="270"/>
        <end position="309"/>
    </location>
</feature>
<feature type="splice variant" id="VSP_015911" description="In isoform 2." evidence="24 25">
    <location>
        <begin position="1"/>
        <end position="25"/>
    </location>
</feature>
<feature type="splice variant" id="VSP_015912" description="In isoform 2." evidence="24 25">
    <original>AGLLSLLTSGQGALDQEALGGLLNTLADRVHCANGPCGK</original>
    <variation>MVDVVGLERETGPRGSPWPGLPLPSLVGPAPLLTCLCPQ</variation>
    <location>
        <begin position="26"/>
        <end position="64"/>
    </location>
</feature>
<feature type="sequence variant" id="VAR_060487" description="In dbSNP:rs2280839.">
    <original>A</original>
    <variation>E</variation>
    <location>
        <position position="22"/>
    </location>
</feature>
<feature type="sequence variant" id="VAR_023627" description="In dbSNP:rs2280838." evidence="6 10 11">
    <original>A</original>
    <variation>T</variation>
    <location>
        <position position="58"/>
    </location>
</feature>
<feature type="sequence variant" id="VAR_023628" description="In dbSNP:rs117535951." evidence="6">
    <original>P</original>
    <variation>L</variation>
    <location>
        <position position="84"/>
    </location>
</feature>
<feature type="sequence variant" id="VAR_023629" description="In AEZ; Loss of zinc transport activity. Decreases location at cell membrane; retained in the ER; dbSNP:rs121434292." evidence="8 22">
    <original>R</original>
    <variation>C</variation>
    <location>
        <position position="95"/>
    </location>
</feature>
<feature type="sequence variant" id="VAR_023630" description="In AEZ; Loss of zinc transport activity. Decreases location at cell membrane; retained in the ER.; dbSNP:rs121434290." evidence="6 22">
    <original>N</original>
    <variation>K</variation>
    <location>
        <position position="106"/>
    </location>
</feature>
<feature type="sequence variant" id="VAR_023631" description="In dbSNP:rs17855765." evidence="6 10 11">
    <original>A</original>
    <variation>T</variation>
    <location>
        <position position="114"/>
    </location>
</feature>
<feature type="sequence variant" id="VAR_057481" description="In dbSNP:rs1871533.">
    <original>M</original>
    <variation>T</variation>
    <location>
        <position position="158"/>
    </location>
</feature>
<feature type="sequence variant" id="VAR_023632" description="In AEZ; Loss of zinc transport activity. Decreases location at cell membrane. Retained in the ER; dbSNP:rs121434287." evidence="7 22">
    <original>P</original>
    <variation>L</variation>
    <location>
        <position position="200"/>
    </location>
</feature>
<feature type="sequence variant" id="VAR_023633" description="In AEZ; uncertain significance; dbSNP:rs2977838." evidence="6 12">
    <original>R</original>
    <variation>W</variation>
    <location>
        <position position="251"/>
    </location>
</feature>
<feature type="sequence variant" id="VAR_057482" description="In dbSNP:rs7823979.">
    <original>E</original>
    <variation>K</variation>
    <location>
        <position position="284"/>
    </location>
</feature>
<feature type="sequence variant" id="VAR_023634" description="In AEZ; uncertain significance; Loss of zinc transport activity. Decreases location at cell membrane. Retained in the ER; dbSNP:rs121434293." evidence="8 22">
    <original>Q</original>
    <variation>H</variation>
    <location>
        <position position="303"/>
    </location>
</feature>
<feature type="sequence variant" id="VAR_023635" description="In AEZ; Decreases location at cell membrane. Retained in the ER; dbSNP:rs782110796." evidence="6 22">
    <original>C</original>
    <variation>Y</variation>
    <location>
        <position position="309"/>
    </location>
</feature>
<feature type="sequence variant" id="VAR_023636" description="In AEZ; dbSNP:rs121434291." evidence="6">
    <original>G</original>
    <variation>D</variation>
    <location>
        <position position="330"/>
    </location>
</feature>
<feature type="sequence variant" id="VAR_023637" description="In dbSNP:rs2272662." evidence="6 10">
    <original>T</original>
    <variation>A</variation>
    <location>
        <position position="357"/>
    </location>
</feature>
<feature type="sequence variant" id="VAR_057483" description="In dbSNP:rs1871534.">
    <original>V</original>
    <variation>L</variation>
    <location>
        <position position="372"/>
    </location>
</feature>
<feature type="sequence variant" id="VAR_023638" description="In AEZ; requires 2 nucleotide substitutions." evidence="6">
    <original>V</original>
    <variation>P</variation>
    <location>
        <position position="372"/>
    </location>
</feature>
<feature type="sequence variant" id="VAR_023639" description="In AEZ; dbSNP:rs121434289." evidence="7">
    <original>G</original>
    <variation>R</variation>
    <location>
        <position position="374"/>
    </location>
</feature>
<feature type="sequence variant" id="VAR_023640" description="In AEZ; uncertain significance." evidence="6">
    <original>L</original>
    <variation>P</variation>
    <location>
        <position position="410"/>
    </location>
</feature>
<feature type="sequence variant" id="VAR_023641" description="In AEZ; dbSNP:rs121434288." evidence="7">
    <original>G</original>
    <variation>R</variation>
    <location>
        <position position="526"/>
    </location>
</feature>
<feature type="sequence variant" id="VAR_023642" description="In AEZ." evidence="6">
    <original>G</original>
    <variation>R</variation>
    <location>
        <position position="630"/>
    </location>
</feature>
<feature type="mutagenesis site" description="Decreases location at cell membrane. Retained in the ER. Loss of zinc transport activity." evidence="22">
    <original>C</original>
    <variation>R</variation>
    <location>
        <position position="62"/>
    </location>
</feature>
<feature type="mutagenesis site" description="Loss of zinc transport activity." evidence="22">
    <original>A</original>
    <variation>T</variation>
    <location>
        <position position="99"/>
    </location>
</feature>
<feature type="mutagenesis site" description="Does not affect location at cell membrane. Does not affect zinc transport activity." evidence="15">
    <original>P</original>
    <variation>A</variation>
    <location>
        <position position="202"/>
    </location>
</feature>
<feature type="mutagenesis site" description="Decreases zinc transport activity; when associated with S-241; S-243; S-245. Decreases Vmax for Zn(2+) by 20% but does not affect the KM; when associated with S-241; S-243; S-245." evidence="18">
    <original>H</original>
    <variation>S</variation>
    <location>
        <position position="238"/>
    </location>
</feature>
<feature type="mutagenesis site" description="Decreases zinc transport activity; when associated with S-238; S-243 and S-245. Decreases Vmax for Zn(2+) by 20% does not affect the KM; when associated with S-238; S-243 and S-245." evidence="18">
    <original>H</original>
    <variation>S</variation>
    <location>
        <position position="241"/>
    </location>
</feature>
<feature type="mutagenesis site" description="Decreases zinc transport activity; when associated with S-238; S-241 and S-245. Decreases Vmax for Zn(2+) by 20% does not affect the KM; when associated with S-238; S-241 and S-245." evidence="18">
    <original>H</original>
    <variation>S</variation>
    <location>
        <position position="243"/>
    </location>
</feature>
<feature type="mutagenesis site" description="Decreases zinc transport activity; when associated with S-238; S-241 and S-243. Decreases Vmax for Zn(2+) by 20% but does not affect the KM; when associated with S-238; S-241 and S-243." evidence="18">
    <original>H</original>
    <variation>S</variation>
    <location>
        <position position="245"/>
    </location>
</feature>
<feature type="mutagenesis site" description="Decreases location at cell membrane; retained in the ER." evidence="22">
    <original>N</original>
    <variation>Q</variation>
    <location>
        <position position="261"/>
    </location>
</feature>
<feature type="mutagenesis site" description="No glycosylated. Very low cell surface expression. Decreases zinc uptake activity." evidence="15">
    <original>W</original>
    <variation>A</variation>
    <location>
        <position position="266"/>
    </location>
</feature>
<feature type="mutagenesis site" description="Decreases zinc uptake activity." evidence="15">
    <original>D</original>
    <variation>A</variation>
    <location>
        <position position="275"/>
    </location>
</feature>
<feature type="mutagenesis site" description="Reduces glycosylation level. Reduces cell surface expression. Decreases zinc uptake activity." evidence="15">
    <original>Q</original>
    <variation>A</variation>
    <location>
        <position position="303"/>
    </location>
</feature>
<feature type="mutagenesis site" description="Reduces zinc transport activity; when associated with A-379." evidence="16">
    <original>D</original>
    <variation>A</variation>
    <location>
        <position position="375"/>
    </location>
</feature>
<feature type="mutagenesis site" description="Reduces zinc transport activity; when associated with A-375." evidence="16">
    <original>H</original>
    <variation>A</variation>
    <location>
        <position position="379"/>
    </location>
</feature>
<feature type="mutagenesis site" description="Does not affect zinc sensing." evidence="21">
    <original>H</original>
    <variation>A</variation>
    <location>
        <position position="388"/>
    </location>
</feature>
<feature type="mutagenesis site" description="Does not affect zinc sensing." evidence="21">
    <original>H</original>
    <variation>A</variation>
    <location>
        <position position="390"/>
    </location>
</feature>
<feature type="mutagenesis site" description="Abrogates endocytosis of the A-511 mutant which undergoes zinc-independent endocytosis." evidence="21">
    <original>LQL</original>
    <variation>AAA</variation>
    <location>
        <begin position="452"/>
        <end position="454"/>
    </location>
</feature>
<feature type="mutagenesis site" description="Abrogates endocytosis." evidence="21">
    <original>L</original>
    <variation>A</variation>
    <location>
        <position position="452"/>
    </location>
</feature>
<feature type="mutagenesis site" description="Reduces endocytosis." evidence="21">
    <original>Q</original>
    <variation>A</variation>
    <location>
        <position position="453"/>
    </location>
</feature>
<feature type="mutagenesis site" description="Abrogates endocytosis." evidence="21">
    <original>L</original>
    <variation>A</variation>
    <location>
        <position position="454"/>
    </location>
</feature>
<feature type="mutagenesis site" description="No effect on SLC39A4 endocytosis. No effect on SLC39A4 endocytosis; when associated with R-611." evidence="21">
    <original>K</original>
    <variation>R</variation>
    <location>
        <position position="463"/>
    </location>
</feature>
<feature type="mutagenesis site" description="No effect on SLC39A4 endocytosis. No effect on SLC39A4 endocytosis; when associated with A-482." evidence="21">
    <original>L</original>
    <variation>A</variation>
    <location>
        <position position="481"/>
    </location>
</feature>
<feature type="mutagenesis site" description="No effect on SLC39A4 endocytosis. No effect on SLC39A4 endocytosis; when associated with A-481." evidence="21">
    <original>L</original>
    <variation>A</variation>
    <location>
        <position position="482"/>
    </location>
</feature>
<feature type="mutagenesis site" description="Moderately reduces zinc transport activity. Completely abrogated zinc transport activity; when associated with A-536 and A-540." evidence="16 19">
    <original>H</original>
    <variation>A</variation>
    <location>
        <position position="507"/>
    </location>
</feature>
<feature type="mutagenesis site" description="Abolishes zinc transport activity." evidence="16 19">
    <original>H</original>
    <variation>R</variation>
    <location>
        <position position="507"/>
    </location>
</feature>
<feature type="mutagenesis site" description="Moderately Reduces zinc transport activity. Reduced zinc transmembrane transporter activity; when associated with A-537. Does not affect substrate specificity; when associated with A-537. Exhibits a zinc transport activity dependent on pH; when associated with A-537." evidence="16 19">
    <original>N</original>
    <variation>A</variation>
    <location>
        <position position="508"/>
    </location>
</feature>
<feature type="mutagenesis site" description="Reduces zinc transport activity by 60%." evidence="16">
    <original>N</original>
    <variation>R</variation>
    <location>
        <position position="508"/>
    </location>
</feature>
<feature type="mutagenesis site" description="Strong reduction of zinc transport activity; when associated with K-537." evidence="19">
    <original>N</original>
    <variation>S</variation>
    <location>
        <position position="508"/>
    </location>
</feature>
<feature type="mutagenesis site" description="Strongly reduced zinc transport activity. Loss of zinc-sensing function; endocytosis of this mutant becomes a zinc-independent process." evidence="16 21">
    <original>D</original>
    <variation>A</variation>
    <location>
        <position position="511"/>
    </location>
</feature>
<feature type="mutagenesis site" description="Moderately reduces zinc transport activity. Completely abrogates zinc transport activity; when associated with A-507 and A-540." evidence="16 19">
    <original>H</original>
    <variation>A</variation>
    <location>
        <position position="536"/>
    </location>
</feature>
<feature type="mutagenesis site" description="Abolishes zinc transport activity." evidence="16 19">
    <original>H</original>
    <variation>R</variation>
    <location>
        <position position="536"/>
    </location>
</feature>
<feature type="mutagenesis site" description="Moderately reduces zinc transport activity. Reduces zinc transmembrane transporter activity; when associated with A-508. Does not affect substrate specificity; when associated with A-508. Exhibits a zinc transport activity dependent on pH; when associated with A-508." evidence="16 19">
    <original>E</original>
    <variation>A</variation>
    <location>
        <position position="537"/>
    </location>
</feature>
<feature type="mutagenesis site" description="Strong reduction of zinc transport activity; when associated with S-537." evidence="19">
    <original>E</original>
    <variation>K</variation>
    <location>
        <position position="537"/>
    </location>
</feature>
<feature type="mutagenesis site" description="Abolishes zinc transport activity." evidence="16">
    <original>E</original>
    <variation>R</variation>
    <location>
        <position position="537"/>
    </location>
</feature>
<feature type="mutagenesis site" description="Increases zinc transport activity. Reduces affinity toward zinc. No defect in endocytosis or zinc sensing. Completely abrogated zinc transport activity; when associated with A-507 and A-536." evidence="16 19 21">
    <original>H</original>
    <variation>A</variation>
    <location>
        <position position="540"/>
    </location>
</feature>
<feature type="mutagenesis site" description="Does not affect zinc transport activity." evidence="16">
    <original>H</original>
    <variation>R</variation>
    <location>
        <position position="540"/>
    </location>
</feature>
<feature type="mutagenesis site" description="No effect on SLC39A4 endocytosis. No effect on SLC39A4 endocytosis; when associated with R-463." evidence="21">
    <original>K</original>
    <variation>R</variation>
    <location>
        <position position="611"/>
    </location>
</feature>
<keyword id="KW-0025">Alternative splicing</keyword>
<keyword id="KW-0104">Cadmium</keyword>
<keyword id="KW-1003">Cell membrane</keyword>
<keyword id="KW-0225">Disease variant</keyword>
<keyword id="KW-1015">Disulfide bond</keyword>
<keyword id="KW-0967">Endosome</keyword>
<keyword id="KW-0325">Glycoprotein</keyword>
<keyword id="KW-0406">Ion transport</keyword>
<keyword id="KW-0472">Membrane</keyword>
<keyword id="KW-0479">Metal-binding</keyword>
<keyword id="KW-1267">Proteomics identification</keyword>
<keyword id="KW-1185">Reference proteome</keyword>
<keyword id="KW-0732">Signal</keyword>
<keyword id="KW-0812">Transmembrane</keyword>
<keyword id="KW-1133">Transmembrane helix</keyword>
<keyword id="KW-0813">Transport</keyword>
<keyword id="KW-0832">Ubl conjugation</keyword>
<keyword id="KW-0862">Zinc</keyword>
<keyword id="KW-0864">Zinc transport</keyword>
<protein>
    <recommendedName>
        <fullName>Zinc transporter ZIP4</fullName>
    </recommendedName>
    <alternativeName>
        <fullName>Solute carrier family 39 member 4</fullName>
    </alternativeName>
    <alternativeName>
        <fullName>Zrt- and Irt-like protein 4</fullName>
        <shortName>ZIP-4</shortName>
    </alternativeName>
</protein>
<gene>
    <name evidence="28" type="primary">SLC39A4</name>
    <name type="synonym">ZIP4</name>
</gene>
<sequence>MASLVSLELGLLLAVLVVTATASPPAGLLSLLTSGQGALDQEALGGLLNTLADRVHCANGPCGKCLSVEDALGLGEPEGSGLPPGPVLEARYVARLSAAAVLYLSNPEGTCEDARAGLWASHADHLLALLESPKALTPGLSWLLQRMQARAAGQTPKMACVDIPQLLEEAVGAGAPGSAGGVLAALLDHVRSGSCFHALPSPQYFVDFVFQQHSSEVPMTLAELSALMQRLGVGREAHSDHSHRHRGASSRDPVPLISSSNSSSVWDTVCLSARDVMAAYGLSEQAGVTPEAWAQLSPALLQQQLSGACTSQSRPPVQDQLSQSERYLYGSLATLLICLCAVFGLLLLTCTGCRGVTHYILQTFLSLAVGAVTGDAVLHLTPKVLGLHTHSEEGLSPQPTWRLLAMLAGLYAFFLFENLFNLLLPRDPEDLEDGPCGHSSHSHGGHSHGVSLQLAPSELRQPKPPHEGSRADLVAEESPELLNPEPRRLSPELRLLPYMITLGDAVHNFADGLAVGAAFASSWKTGLATSLAVFCHELPHELGDFAALLHAGLSVRQALLLNLASALTAFAGLYVALAVGVSEESEAWILAVATGLFLYVALCDMLPAMLKVRDPRPWLLFLLHNVGLLGGWTVLLLLSLYEDDITF</sequence>
<reference key="1">
    <citation type="journal article" date="2002" name="Nat. Genet.">
        <title>Identification of SLC39A4, a gene involved in acrodermatitis enteropathica.</title>
        <authorList>
            <person name="Kuery S."/>
            <person name="Dreno B."/>
            <person name="Bezieau S."/>
            <person name="Giraudet S."/>
            <person name="Kharfi M."/>
            <person name="Kamoun R."/>
            <person name="Moisan J.-P."/>
        </authorList>
    </citation>
    <scope>NUCLEOTIDE SEQUENCE [MRNA] (ISOFORMS 1 AND 2)</scope>
    <scope>TISSUE SPECIFICITY</scope>
    <scope>VARIANTS AEZ LEU-200; ARG-374 AND ARG-526</scope>
</reference>
<reference key="2">
    <citation type="journal article" date="2004" name="Nat. Genet.">
        <title>Complete sequencing and characterization of 21,243 full-length human cDNAs.</title>
        <authorList>
            <person name="Ota T."/>
            <person name="Suzuki Y."/>
            <person name="Nishikawa T."/>
            <person name="Otsuki T."/>
            <person name="Sugiyama T."/>
            <person name="Irie R."/>
            <person name="Wakamatsu A."/>
            <person name="Hayashi K."/>
            <person name="Sato H."/>
            <person name="Nagai K."/>
            <person name="Kimura K."/>
            <person name="Makita H."/>
            <person name="Sekine M."/>
            <person name="Obayashi M."/>
            <person name="Nishi T."/>
            <person name="Shibahara T."/>
            <person name="Tanaka T."/>
            <person name="Ishii S."/>
            <person name="Yamamoto J."/>
            <person name="Saito K."/>
            <person name="Kawai Y."/>
            <person name="Isono Y."/>
            <person name="Nakamura Y."/>
            <person name="Nagahari K."/>
            <person name="Murakami K."/>
            <person name="Yasuda T."/>
            <person name="Iwayanagi T."/>
            <person name="Wagatsuma M."/>
            <person name="Shiratori A."/>
            <person name="Sudo H."/>
            <person name="Hosoiri T."/>
            <person name="Kaku Y."/>
            <person name="Kodaira H."/>
            <person name="Kondo H."/>
            <person name="Sugawara M."/>
            <person name="Takahashi M."/>
            <person name="Kanda K."/>
            <person name="Yokoi T."/>
            <person name="Furuya T."/>
            <person name="Kikkawa E."/>
            <person name="Omura Y."/>
            <person name="Abe K."/>
            <person name="Kamihara K."/>
            <person name="Katsuta N."/>
            <person name="Sato K."/>
            <person name="Tanikawa M."/>
            <person name="Yamazaki M."/>
            <person name="Ninomiya K."/>
            <person name="Ishibashi T."/>
            <person name="Yamashita H."/>
            <person name="Murakawa K."/>
            <person name="Fujimori K."/>
            <person name="Tanai H."/>
            <person name="Kimata M."/>
            <person name="Watanabe M."/>
            <person name="Hiraoka S."/>
            <person name="Chiba Y."/>
            <person name="Ishida S."/>
            <person name="Ono Y."/>
            <person name="Takiguchi S."/>
            <person name="Watanabe S."/>
            <person name="Yosida M."/>
            <person name="Hotuta T."/>
            <person name="Kusano J."/>
            <person name="Kanehori K."/>
            <person name="Takahashi-Fujii A."/>
            <person name="Hara H."/>
            <person name="Tanase T.-O."/>
            <person name="Nomura Y."/>
            <person name="Togiya S."/>
            <person name="Komai F."/>
            <person name="Hara R."/>
            <person name="Takeuchi K."/>
            <person name="Arita M."/>
            <person name="Imose N."/>
            <person name="Musashino K."/>
            <person name="Yuuki H."/>
            <person name="Oshima A."/>
            <person name="Sasaki N."/>
            <person name="Aotsuka S."/>
            <person name="Yoshikawa Y."/>
            <person name="Matsunawa H."/>
            <person name="Ichihara T."/>
            <person name="Shiohata N."/>
            <person name="Sano S."/>
            <person name="Moriya S."/>
            <person name="Momiyama H."/>
            <person name="Satoh N."/>
            <person name="Takami S."/>
            <person name="Terashima Y."/>
            <person name="Suzuki O."/>
            <person name="Nakagawa S."/>
            <person name="Senoh A."/>
            <person name="Mizoguchi H."/>
            <person name="Goto Y."/>
            <person name="Shimizu F."/>
            <person name="Wakebe H."/>
            <person name="Hishigaki H."/>
            <person name="Watanabe T."/>
            <person name="Sugiyama A."/>
            <person name="Takemoto M."/>
            <person name="Kawakami B."/>
            <person name="Yamazaki M."/>
            <person name="Watanabe K."/>
            <person name="Kumagai A."/>
            <person name="Itakura S."/>
            <person name="Fukuzumi Y."/>
            <person name="Fujimori Y."/>
            <person name="Komiyama M."/>
            <person name="Tashiro H."/>
            <person name="Tanigami A."/>
            <person name="Fujiwara T."/>
            <person name="Ono T."/>
            <person name="Yamada K."/>
            <person name="Fujii Y."/>
            <person name="Ozaki K."/>
            <person name="Hirao M."/>
            <person name="Ohmori Y."/>
            <person name="Kawabata A."/>
            <person name="Hikiji T."/>
            <person name="Kobatake N."/>
            <person name="Inagaki H."/>
            <person name="Ikema Y."/>
            <person name="Okamoto S."/>
            <person name="Okitani R."/>
            <person name="Kawakami T."/>
            <person name="Noguchi S."/>
            <person name="Itoh T."/>
            <person name="Shigeta K."/>
            <person name="Senba T."/>
            <person name="Matsumura K."/>
            <person name="Nakajima Y."/>
            <person name="Mizuno T."/>
            <person name="Morinaga M."/>
            <person name="Sasaki M."/>
            <person name="Togashi T."/>
            <person name="Oyama M."/>
            <person name="Hata H."/>
            <person name="Watanabe M."/>
            <person name="Komatsu T."/>
            <person name="Mizushima-Sugano J."/>
            <person name="Satoh T."/>
            <person name="Shirai Y."/>
            <person name="Takahashi Y."/>
            <person name="Nakagawa K."/>
            <person name="Okumura K."/>
            <person name="Nagase T."/>
            <person name="Nomura N."/>
            <person name="Kikuchi H."/>
            <person name="Masuho Y."/>
            <person name="Yamashita R."/>
            <person name="Nakai K."/>
            <person name="Yada T."/>
            <person name="Nakamura Y."/>
            <person name="Ohara O."/>
            <person name="Isogai T."/>
            <person name="Sugano S."/>
        </authorList>
    </citation>
    <scope>NUCLEOTIDE SEQUENCE [LARGE SCALE MRNA] (ISOFORMS 1 AND 2)</scope>
    <scope>VARIANTS THR-58 AND THR-114</scope>
    <scope>VARIANTS AEZ TYR-309 AND ALA-357</scope>
</reference>
<reference key="3">
    <citation type="journal article" date="2006" name="Nature">
        <title>DNA sequence and analysis of human chromosome 8.</title>
        <authorList>
            <person name="Nusbaum C."/>
            <person name="Mikkelsen T.S."/>
            <person name="Zody M.C."/>
            <person name="Asakawa S."/>
            <person name="Taudien S."/>
            <person name="Garber M."/>
            <person name="Kodira C.D."/>
            <person name="Schueler M.G."/>
            <person name="Shimizu A."/>
            <person name="Whittaker C.A."/>
            <person name="Chang J.L."/>
            <person name="Cuomo C.A."/>
            <person name="Dewar K."/>
            <person name="FitzGerald M.G."/>
            <person name="Yang X."/>
            <person name="Allen N.R."/>
            <person name="Anderson S."/>
            <person name="Asakawa T."/>
            <person name="Blechschmidt K."/>
            <person name="Bloom T."/>
            <person name="Borowsky M.L."/>
            <person name="Butler J."/>
            <person name="Cook A."/>
            <person name="Corum B."/>
            <person name="DeArellano K."/>
            <person name="DeCaprio D."/>
            <person name="Dooley K.T."/>
            <person name="Dorris L. III"/>
            <person name="Engels R."/>
            <person name="Gloeckner G."/>
            <person name="Hafez N."/>
            <person name="Hagopian D.S."/>
            <person name="Hall J.L."/>
            <person name="Ishikawa S.K."/>
            <person name="Jaffe D.B."/>
            <person name="Kamat A."/>
            <person name="Kudoh J."/>
            <person name="Lehmann R."/>
            <person name="Lokitsang T."/>
            <person name="Macdonald P."/>
            <person name="Major J.E."/>
            <person name="Matthews C.D."/>
            <person name="Mauceli E."/>
            <person name="Menzel U."/>
            <person name="Mihalev A.H."/>
            <person name="Minoshima S."/>
            <person name="Murayama Y."/>
            <person name="Naylor J.W."/>
            <person name="Nicol R."/>
            <person name="Nguyen C."/>
            <person name="O'Leary S.B."/>
            <person name="O'Neill K."/>
            <person name="Parker S.C.J."/>
            <person name="Polley A."/>
            <person name="Raymond C.K."/>
            <person name="Reichwald K."/>
            <person name="Rodriguez J."/>
            <person name="Sasaki T."/>
            <person name="Schilhabel M."/>
            <person name="Siddiqui R."/>
            <person name="Smith C.L."/>
            <person name="Sneddon T.P."/>
            <person name="Talamas J.A."/>
            <person name="Tenzin P."/>
            <person name="Topham K."/>
            <person name="Venkataraman V."/>
            <person name="Wen G."/>
            <person name="Yamazaki S."/>
            <person name="Young S.K."/>
            <person name="Zeng Q."/>
            <person name="Zimmer A.R."/>
            <person name="Rosenthal A."/>
            <person name="Birren B.W."/>
            <person name="Platzer M."/>
            <person name="Shimizu N."/>
            <person name="Lander E.S."/>
        </authorList>
    </citation>
    <scope>NUCLEOTIDE SEQUENCE [LARGE SCALE GENOMIC DNA]</scope>
    <scope>VARIANT TRP-251</scope>
</reference>
<reference key="4">
    <citation type="journal article" date="2004" name="Genome Res.">
        <title>The status, quality, and expansion of the NIH full-length cDNA project: the Mammalian Gene Collection (MGC).</title>
        <authorList>
            <consortium name="The MGC Project Team"/>
        </authorList>
    </citation>
    <scope>NUCLEOTIDE SEQUENCE [LARGE SCALE MRNA] (ISOFORM 1)</scope>
    <scope>VARIANTS THR-58 AND THR-114</scope>
    <source>
        <tissue>Lung</tissue>
        <tissue>Ovary</tissue>
    </source>
</reference>
<reference key="5">
    <citation type="journal article" date="2002" name="Am. J. Hum. Genet.">
        <title>A novel member of a zinc transporter family is defective in acrodermatitis enteropathica.</title>
        <authorList>
            <person name="Wang K."/>
            <person name="Zhou B."/>
            <person name="Kuo Y.-M."/>
            <person name="Zemansky J."/>
            <person name="Gitschier J."/>
        </authorList>
    </citation>
    <scope>TISSUE SPECIFICITY</scope>
    <scope>VARIANTS THR-58; LEU-84; THR-114 AND ALA-357</scope>
    <scope>VARIANTS AEZ LYS-106; TRP-251; TYR-309; ASP-330; PRO-372; PRO-410 AND ARG-630</scope>
</reference>
<reference key="6">
    <citation type="journal article" date="2004" name="J. Biol. Chem.">
        <title>Zn2+-stimulated endocytosis of the mZIP4 zinc transporter regulates its location at the plasma membrane.</title>
        <authorList>
            <person name="Kim B.-E."/>
            <person name="Wang F."/>
            <person name="Dufner-Beattie J."/>
            <person name="Andrews G.K."/>
            <person name="Eide D.J."/>
            <person name="Petris M.J."/>
        </authorList>
    </citation>
    <scope>SUBCELLULAR LOCATION</scope>
</reference>
<reference key="7">
    <citation type="journal article" date="2003" name="J. Invest. Dermatol.">
        <title>Novel SLC39A4 mutations in acrodermatitis enteropathica.</title>
        <authorList>
            <person name="Nakano A."/>
            <person name="Nakano H."/>
            <person name="Nomura K."/>
            <person name="Toyomaki Y."/>
            <person name="Hanada K."/>
        </authorList>
    </citation>
    <scope>VARIANTS AEZ CYS-95 AND HIS-303</scope>
</reference>
<reference key="8">
    <citation type="journal article" date="2007" name="J. Biol. Chem.">
        <title>A histidine-rich cluster mediates the ubiquitination and degradation of the human zinc transporter, hZIP4, and protects against zinc cytotoxicity.</title>
        <authorList>
            <person name="Mao X."/>
            <person name="Kim B.E."/>
            <person name="Wang F."/>
            <person name="Eide D.J."/>
            <person name="Petris M.J."/>
        </authorList>
    </citation>
    <scope>FUNCTION</scope>
    <scope>TRANSPORTER ACTIVITY</scope>
    <scope>UBIQUITINATION</scope>
    <scope>GLYCOSYLATION</scope>
</reference>
<reference key="9">
    <citation type="journal article" date="2012" name="Biochemistry">
        <title>The human ZIP4 transporter has two distinct binding affinities and mediates transport of multiple transition metals.</title>
        <authorList>
            <person name="Antala S."/>
            <person name="Dempski R.E."/>
        </authorList>
    </citation>
    <scope>FUNCTION</scope>
    <scope>TRANSPORTER ACTIVITY</scope>
    <scope>BIOPHYSICOCHEMICAL PROPERTIES</scope>
    <scope>SUBSTRATE SPECIFICITY</scope>
</reference>
<reference key="10">
    <citation type="journal article" date="2016" name="Nat. Commun.">
        <title>Structural insights of ZIP4 extracellular domain critical for optimal zinc transport.</title>
        <authorList>
            <person name="Zhang T."/>
            <person name="Sui D."/>
            <person name="Hu J."/>
        </authorList>
    </citation>
    <scope>FUNCTION</scope>
    <scope>TRANSPORTER ACTIVITY</scope>
    <scope>BIOPHYSICOCHEMICAL PROPERTIES</scope>
    <scope>DOMAIN</scope>
    <scope>MUTAGENESIS OF PRO-202; TRP-266; ASP-275 AND GLN-303</scope>
    <scope>GLYCOSYLATION</scope>
</reference>
<reference key="11">
    <citation type="journal article" date="2017" name="Sci. Adv.">
        <title>Crystal structures of a ZIP zinc transporter reveal a binuclear metal center in the transport pathway.</title>
        <authorList>
            <person name="Zhang T."/>
            <person name="Liu J."/>
            <person name="Fellner M."/>
            <person name="Zhang C."/>
            <person name="Sui D."/>
            <person name="Hu J."/>
        </authorList>
    </citation>
    <scope>FUNCTION</scope>
    <scope>TRANSPORTER ACTIVITY</scope>
    <scope>BIOPHYSICOCHEMICAL PROPERTIES</scope>
    <scope>MUTAGENESIS OF ASP-375; HIS-379; HIS-507; ASN-508; ASP-511; HIS-536; GLU-537 AND HIS-540</scope>
</reference>
<reference key="12">
    <citation type="journal article" date="2019" name="Biochemistry">
        <title>Quantifying the Oligomeric State of hZIP4 on the Surface of Cells.</title>
        <authorList>
            <person name="Ahern M.E."/>
            <person name="Bafaro E.M."/>
            <person name="Cowan A."/>
            <person name="Dempski R.E."/>
        </authorList>
    </citation>
    <scope>SUBUNIT</scope>
    <scope>SUBCELLULAR LOCATION</scope>
</reference>
<reference key="13">
    <citation type="journal article" date="2019" name="Biochem. J.">
        <title>The histidine-rich loop in the extracellular domain of ZIP4 binds zinc and plays a role in zinc transport.</title>
        <authorList>
            <person name="Zhang T."/>
            <person name="Kuliyev E."/>
            <person name="Sui D."/>
            <person name="Hu J."/>
        </authorList>
    </citation>
    <scope>FUNCTION</scope>
    <scope>TRANSPORTER ACTIVITY</scope>
    <scope>SUBCELLULAR LOCATION</scope>
    <scope>ZINC-BINDING</scope>
    <scope>BIOPHYSICOCHEMICAL PROPERTIES</scope>
    <scope>MUTAGENESIS OF HIS-238; HIS-241; HIS-243 AND HIS-245</scope>
</reference>
<reference key="14">
    <citation type="journal article" date="2020" name="FASEB J.">
        <title>Asymmetric functions of a binuclear metal center within the transport pathway of a human zinc transporter ZIP4.</title>
        <authorList>
            <person name="Zhang T."/>
            <person name="Sui D."/>
            <person name="Zhang C."/>
            <person name="Cole L."/>
            <person name="Hu J."/>
        </authorList>
    </citation>
    <scope>FUNCTION</scope>
    <scope>TRANSPORTER ACTIVITY</scope>
    <scope>SUBSTRATE SPECIFICITY</scope>
    <scope>MUTAGENESIS OF HIS-507; ASN-508; HIS-536; GLU-537 AND HIS-540</scope>
</reference>
<reference key="15">
    <citation type="journal article" date="2020" name="Cell Rep.">
        <title>Molecular Basis of Zinc-Dependent Endocytosis of Human ZIP4 Transceptor.</title>
        <authorList>
            <person name="Zhang C."/>
            <person name="Sui D."/>
            <person name="Zhang T."/>
            <person name="Hu J."/>
        </authorList>
    </citation>
    <scope>SUBCELLULAR LOCATION</scope>
    <scope>MUTAGENESIS OF HIS-388; HIS-390; 452-LEU--LEU-454; LEU-452; GLN-453; LEU-454; LYS-463; LEU-481; LEU-482; ASP-511; HIS-540 AND LYS-611</scope>
</reference>
<reference key="16">
    <citation type="journal article" date="2020" name="Int. J. Mol. Sci.">
        <title>Elucidating the H+ Coupled Zn2+ Transport Mechanism of ZIP4; Implications in Acrodermatitis Enteropathica.</title>
        <authorList>
            <person name="Hoch E."/>
            <person name="Levy M."/>
            <person name="Hershfinkel M."/>
            <person name="Sekler I."/>
        </authorList>
    </citation>
    <scope>FUNCTION</scope>
    <scope>TRANSPORTER ACTIVITY</scope>
    <scope>BIOPHYSICOCHEMICAL PROPERTIES</scope>
</reference>
<reference key="17">
    <citation type="journal article" date="2021" name="J. Biol. Chem.">
        <title>Zinc transporter mutations linked to acrodermatitis enteropathica disrupt function and cause mistrafficking.</title>
        <authorList>
            <person name="Kuliyev E."/>
            <person name="Zhang C."/>
            <person name="Sui D."/>
            <person name="Hu J."/>
        </authorList>
    </citation>
    <scope>FUNCTION</scope>
    <scope>TRANSPORTER ACTIVITY</scope>
    <scope>SUBCELLULAR LOCATION</scope>
    <scope>MUTAGENESIS OF CYS-62; ALA-99 AND ASN-261</scope>
    <scope>CHARACTERIZATION OF VARIANTS AEZ ARG-95; ASN-106; PRO-200; GLN-303 AND CYS-309</scope>
    <scope>GLYCOSYLATION AT ASN-261</scope>
</reference>
<reference key="18">
    <citation type="journal article" date="2022" name="Sci. Rep.">
        <title>The transmembrane domains mediate oligomerization of the human ZIP4 transporter in vivo.</title>
        <authorList>
            <person name="Liu Y."/>
            <person name="Bafaro E.M."/>
            <person name="Cowan A.E."/>
            <person name="Dempski R.E."/>
        </authorList>
    </citation>
    <scope>FUNCTION</scope>
    <scope>TRANSPORTER ACTIVITY</scope>
    <scope>BIOPHYSICOCHEMICAL PROPERTIES</scope>
    <scope>SUBUNIT</scope>
    <scope>SUBCELLULAR LOCATION</scope>
</reference>
<evidence type="ECO:0000250" key="1">
    <source>
        <dbReference type="UniProtKB" id="A0A0H3LM39"/>
    </source>
</evidence>
<evidence type="ECO:0000250" key="2">
    <source>
        <dbReference type="UniProtKB" id="L5KLU7"/>
    </source>
</evidence>
<evidence type="ECO:0000250" key="3">
    <source>
        <dbReference type="UniProtKB" id="Q78IQ7"/>
    </source>
</evidence>
<evidence type="ECO:0000255" key="4"/>
<evidence type="ECO:0000256" key="5">
    <source>
        <dbReference type="SAM" id="MobiDB-lite"/>
    </source>
</evidence>
<evidence type="ECO:0000269" key="6">
    <source>
    </source>
</evidence>
<evidence type="ECO:0000269" key="7">
    <source>
    </source>
</evidence>
<evidence type="ECO:0000269" key="8">
    <source>
    </source>
</evidence>
<evidence type="ECO:0000269" key="9">
    <source>
    </source>
</evidence>
<evidence type="ECO:0000269" key="10">
    <source>
    </source>
</evidence>
<evidence type="ECO:0000269" key="11">
    <source>
    </source>
</evidence>
<evidence type="ECO:0000269" key="12">
    <source>
    </source>
</evidence>
<evidence type="ECO:0000269" key="13">
    <source>
    </source>
</evidence>
<evidence type="ECO:0000269" key="14">
    <source>
    </source>
</evidence>
<evidence type="ECO:0000269" key="15">
    <source>
    </source>
</evidence>
<evidence type="ECO:0000269" key="16">
    <source>
    </source>
</evidence>
<evidence type="ECO:0000269" key="17">
    <source>
    </source>
</evidence>
<evidence type="ECO:0000269" key="18">
    <source>
    </source>
</evidence>
<evidence type="ECO:0000269" key="19">
    <source>
    </source>
</evidence>
<evidence type="ECO:0000269" key="20">
    <source>
    </source>
</evidence>
<evidence type="ECO:0000269" key="21">
    <source>
    </source>
</evidence>
<evidence type="ECO:0000269" key="22">
    <source>
    </source>
</evidence>
<evidence type="ECO:0000269" key="23">
    <source>
    </source>
</evidence>
<evidence type="ECO:0000303" key="24">
    <source>
    </source>
</evidence>
<evidence type="ECO:0000303" key="25">
    <source>
    </source>
</evidence>
<evidence type="ECO:0000305" key="26"/>
<evidence type="ECO:0000305" key="27">
    <source>
    </source>
</evidence>
<evidence type="ECO:0000312" key="28">
    <source>
        <dbReference type="HGNC" id="HGNC:17129"/>
    </source>
</evidence>
<name>S39A4_HUMAN</name>
<organism>
    <name type="scientific">Homo sapiens</name>
    <name type="common">Human</name>
    <dbReference type="NCBI Taxonomy" id="9606"/>
    <lineage>
        <taxon>Eukaryota</taxon>
        <taxon>Metazoa</taxon>
        <taxon>Chordata</taxon>
        <taxon>Craniata</taxon>
        <taxon>Vertebrata</taxon>
        <taxon>Euteleostomi</taxon>
        <taxon>Mammalia</taxon>
        <taxon>Eutheria</taxon>
        <taxon>Euarchontoglires</taxon>
        <taxon>Primates</taxon>
        <taxon>Haplorrhini</taxon>
        <taxon>Catarrhini</taxon>
        <taxon>Hominidae</taxon>
        <taxon>Homo</taxon>
    </lineage>
</organism>
<proteinExistence type="evidence at protein level"/>
<dbReference type="EMBL" id="AK000334">
    <property type="protein sequence ID" value="BAA91091.1"/>
    <property type="status" value="ALT_FRAME"/>
    <property type="molecule type" value="mRNA"/>
</dbReference>
<dbReference type="EMBL" id="AK025537">
    <property type="protein sequence ID" value="BAB15164.1"/>
    <property type="molecule type" value="mRNA"/>
</dbReference>
<dbReference type="EMBL" id="AF205589">
    <property type="status" value="NOT_ANNOTATED_CDS"/>
    <property type="molecule type" value="Genomic_DNA"/>
</dbReference>
<dbReference type="EMBL" id="BC001688">
    <property type="protein sequence ID" value="AAH01688.2"/>
    <property type="molecule type" value="mRNA"/>
</dbReference>
<dbReference type="EMBL" id="BC062625">
    <property type="protein sequence ID" value="AAH62625.1"/>
    <property type="molecule type" value="mRNA"/>
</dbReference>
<dbReference type="CCDS" id="CCDS43782.1">
    <molecule id="Q6P5W5-2"/>
</dbReference>
<dbReference type="CCDS" id="CCDS6424.1">
    <molecule id="Q6P5W5-1"/>
</dbReference>
<dbReference type="RefSeq" id="NP_060237.3">
    <molecule id="Q6P5W5-2"/>
    <property type="nucleotide sequence ID" value="NM_017767.3"/>
</dbReference>
<dbReference type="RefSeq" id="NP_570901.3">
    <molecule id="Q6P5W5-1"/>
    <property type="nucleotide sequence ID" value="NM_130849.4"/>
</dbReference>
<dbReference type="SMR" id="Q6P5W5"/>
<dbReference type="BioGRID" id="120769">
    <property type="interactions" value="184"/>
</dbReference>
<dbReference type="FunCoup" id="Q6P5W5">
    <property type="interactions" value="123"/>
</dbReference>
<dbReference type="IntAct" id="Q6P5W5">
    <property type="interactions" value="145"/>
</dbReference>
<dbReference type="MINT" id="Q6P5W5"/>
<dbReference type="STRING" id="9606.ENSP00000301305"/>
<dbReference type="DrugBank" id="DB14533">
    <property type="generic name" value="Zinc chloride"/>
</dbReference>
<dbReference type="DrugBank" id="DB14548">
    <property type="generic name" value="Zinc sulfate, unspecified form"/>
</dbReference>
<dbReference type="TCDB" id="2.A.5.4.1">
    <property type="family name" value="the zinc (zn(2+))-iron (fe(2+)) permease (zip) family"/>
</dbReference>
<dbReference type="GlyCosmos" id="Q6P5W5">
    <property type="glycosylation" value="1 site, No reported glycans"/>
</dbReference>
<dbReference type="GlyGen" id="Q6P5W5">
    <property type="glycosylation" value="3 sites, 1 O-linked glycan (2 sites)"/>
</dbReference>
<dbReference type="iPTMnet" id="Q6P5W5"/>
<dbReference type="PhosphoSitePlus" id="Q6P5W5"/>
<dbReference type="BioMuta" id="SLC39A4"/>
<dbReference type="DMDM" id="296452970"/>
<dbReference type="jPOST" id="Q6P5W5"/>
<dbReference type="MassIVE" id="Q6P5W5"/>
<dbReference type="PaxDb" id="9606-ENSP00000301305"/>
<dbReference type="PeptideAtlas" id="Q6P5W5"/>
<dbReference type="ProteomicsDB" id="67007">
    <molecule id="Q6P5W5-1"/>
</dbReference>
<dbReference type="ProteomicsDB" id="67008">
    <molecule id="Q6P5W5-2"/>
</dbReference>
<dbReference type="Antibodypedia" id="28508">
    <property type="antibodies" value="219 antibodies from 32 providers"/>
</dbReference>
<dbReference type="DNASU" id="55630"/>
<dbReference type="Ensembl" id="ENST00000276833.9">
    <molecule id="Q6P5W5-2"/>
    <property type="protein sequence ID" value="ENSP00000276833.5"/>
    <property type="gene ID" value="ENSG00000147804.10"/>
</dbReference>
<dbReference type="Ensembl" id="ENST00000301305.8">
    <molecule id="Q6P5W5-1"/>
    <property type="protein sequence ID" value="ENSP00000301305.4"/>
    <property type="gene ID" value="ENSG00000147804.10"/>
</dbReference>
<dbReference type="GeneID" id="55630"/>
<dbReference type="KEGG" id="hsa:55630"/>
<dbReference type="MANE-Select" id="ENST00000301305.8">
    <property type="protein sequence ID" value="ENSP00000301305.4"/>
    <property type="RefSeq nucleotide sequence ID" value="NM_130849.4"/>
    <property type="RefSeq protein sequence ID" value="NP_570901.3"/>
</dbReference>
<dbReference type="UCSC" id="uc003zcq.4">
    <molecule id="Q6P5W5-1"/>
    <property type="organism name" value="human"/>
</dbReference>
<dbReference type="AGR" id="HGNC:17129"/>
<dbReference type="CTD" id="55630"/>
<dbReference type="DisGeNET" id="55630"/>
<dbReference type="GeneCards" id="SLC39A4"/>
<dbReference type="HGNC" id="HGNC:17129">
    <property type="gene designation" value="SLC39A4"/>
</dbReference>
<dbReference type="HPA" id="ENSG00000147804">
    <property type="expression patterns" value="Tissue enriched (intestine)"/>
</dbReference>
<dbReference type="MalaCards" id="SLC39A4"/>
<dbReference type="MIM" id="201100">
    <property type="type" value="phenotype"/>
</dbReference>
<dbReference type="MIM" id="607059">
    <property type="type" value="gene"/>
</dbReference>
<dbReference type="neXtProt" id="NX_Q6P5W5"/>
<dbReference type="OpenTargets" id="ENSG00000147804"/>
<dbReference type="Orphanet" id="37">
    <property type="disease" value="Acrodermatitis enteropathica"/>
</dbReference>
<dbReference type="PharmGKB" id="PA38204"/>
<dbReference type="VEuPathDB" id="HostDB:ENSG00000147804"/>
<dbReference type="eggNOG" id="KOG2693">
    <property type="taxonomic scope" value="Eukaryota"/>
</dbReference>
<dbReference type="GeneTree" id="ENSGT00940000160042"/>
<dbReference type="HOGENOM" id="CLU_015114_12_0_1"/>
<dbReference type="InParanoid" id="Q6P5W5"/>
<dbReference type="OMA" id="PPKQPHE"/>
<dbReference type="OrthoDB" id="200954at2759"/>
<dbReference type="PAN-GO" id="Q6P5W5">
    <property type="GO annotations" value="4 GO annotations based on evolutionary models"/>
</dbReference>
<dbReference type="PhylomeDB" id="Q6P5W5"/>
<dbReference type="TreeFam" id="TF318470"/>
<dbReference type="PathwayCommons" id="Q6P5W5"/>
<dbReference type="Reactome" id="R-HSA-442380">
    <property type="pathway name" value="Zinc influx into cells by the SLC39 gene family"/>
</dbReference>
<dbReference type="Reactome" id="R-HSA-5619088">
    <property type="pathway name" value="Defective SLC39A4 causes acrodermatitis enteropathica, zinc-deficiency type (AEZ)"/>
</dbReference>
<dbReference type="SignaLink" id="Q6P5W5"/>
<dbReference type="BioGRID-ORCS" id="55630">
    <property type="hits" value="20 hits in 1161 CRISPR screens"/>
</dbReference>
<dbReference type="ChiTaRS" id="SLC39A4">
    <property type="organism name" value="human"/>
</dbReference>
<dbReference type="GenomeRNAi" id="55630"/>
<dbReference type="Pharos" id="Q6P5W5">
    <property type="development level" value="Tbio"/>
</dbReference>
<dbReference type="PRO" id="PR:Q6P5W5"/>
<dbReference type="Proteomes" id="UP000005640">
    <property type="component" value="Chromosome 8"/>
</dbReference>
<dbReference type="RNAct" id="Q6P5W5">
    <property type="molecule type" value="protein"/>
</dbReference>
<dbReference type="Bgee" id="ENSG00000147804">
    <property type="expression patterns" value="Expressed in duodenum and 97 other cell types or tissues"/>
</dbReference>
<dbReference type="ExpressionAtlas" id="Q6P5W5">
    <property type="expression patterns" value="baseline and differential"/>
</dbReference>
<dbReference type="GO" id="GO:0016324">
    <property type="term" value="C:apical plasma membrane"/>
    <property type="evidence" value="ECO:0000250"/>
    <property type="project" value="UniProtKB"/>
</dbReference>
<dbReference type="GO" id="GO:0031410">
    <property type="term" value="C:cytoplasmic vesicle"/>
    <property type="evidence" value="ECO:0000314"/>
    <property type="project" value="UniProtKB"/>
</dbReference>
<dbReference type="GO" id="GO:0005886">
    <property type="term" value="C:plasma membrane"/>
    <property type="evidence" value="ECO:0000314"/>
    <property type="project" value="UniProtKB"/>
</dbReference>
<dbReference type="GO" id="GO:0055038">
    <property type="term" value="C:recycling endosome membrane"/>
    <property type="evidence" value="ECO:0000314"/>
    <property type="project" value="UniProtKB"/>
</dbReference>
<dbReference type="GO" id="GO:0042802">
    <property type="term" value="F:identical protein binding"/>
    <property type="evidence" value="ECO:0000314"/>
    <property type="project" value="UniProtKB"/>
</dbReference>
<dbReference type="GO" id="GO:0046872">
    <property type="term" value="F:metal ion binding"/>
    <property type="evidence" value="ECO:0000269"/>
    <property type="project" value="DisProt"/>
</dbReference>
<dbReference type="GO" id="GO:0140410">
    <property type="term" value="F:monoatomic cation:bicarbonate symporter activity"/>
    <property type="evidence" value="ECO:0000318"/>
    <property type="project" value="GO_Central"/>
</dbReference>
<dbReference type="GO" id="GO:0008270">
    <property type="term" value="F:zinc ion binding"/>
    <property type="evidence" value="ECO:0000315"/>
    <property type="project" value="DisProt"/>
</dbReference>
<dbReference type="GO" id="GO:0106219">
    <property type="term" value="F:zinc ion sensor activity"/>
    <property type="evidence" value="ECO:0000315"/>
    <property type="project" value="UniProtKB"/>
</dbReference>
<dbReference type="GO" id="GO:0140486">
    <property type="term" value="F:zinc ion sequestering activity"/>
    <property type="evidence" value="ECO:0000315"/>
    <property type="project" value="DisProt"/>
</dbReference>
<dbReference type="GO" id="GO:0005385">
    <property type="term" value="F:zinc ion transmembrane transporter activity"/>
    <property type="evidence" value="ECO:0000314"/>
    <property type="project" value="UniProtKB"/>
</dbReference>
<dbReference type="GO" id="GO:0034224">
    <property type="term" value="P:cellular response to zinc ion starvation"/>
    <property type="evidence" value="ECO:0007669"/>
    <property type="project" value="Ensembl"/>
</dbReference>
<dbReference type="GO" id="GO:0030003">
    <property type="term" value="P:intracellular monoatomic cation homeostasis"/>
    <property type="evidence" value="ECO:0000318"/>
    <property type="project" value="GO_Central"/>
</dbReference>
<dbReference type="GO" id="GO:0006882">
    <property type="term" value="P:intracellular zinc ion homeostasis"/>
    <property type="evidence" value="ECO:0000250"/>
    <property type="project" value="UniProtKB"/>
</dbReference>
<dbReference type="GO" id="GO:0071578">
    <property type="term" value="P:zinc ion import across plasma membrane"/>
    <property type="evidence" value="ECO:0000318"/>
    <property type="project" value="GO_Central"/>
</dbReference>
<dbReference type="GO" id="GO:0071577">
    <property type="term" value="P:zinc ion transmembrane transport"/>
    <property type="evidence" value="ECO:0000314"/>
    <property type="project" value="UniProtKB"/>
</dbReference>
<dbReference type="DisProt" id="DP02554"/>
<dbReference type="InterPro" id="IPR003689">
    <property type="entry name" value="ZIP"/>
</dbReference>
<dbReference type="InterPro" id="IPR049406">
    <property type="entry name" value="ZIP4_12_EF-hand"/>
</dbReference>
<dbReference type="InterPro" id="IPR041137">
    <property type="entry name" value="ZIP4_N"/>
</dbReference>
<dbReference type="InterPro" id="IPR050799">
    <property type="entry name" value="ZIP_Transporter"/>
</dbReference>
<dbReference type="PANTHER" id="PTHR12191">
    <property type="entry name" value="SOLUTE CARRIER FAMILY 39"/>
    <property type="match status" value="1"/>
</dbReference>
<dbReference type="PANTHER" id="PTHR12191:SF21">
    <property type="entry name" value="ZINC TRANSPORTER ZIP4"/>
    <property type="match status" value="1"/>
</dbReference>
<dbReference type="Pfam" id="PF21116">
    <property type="entry name" value="EF-hand_Zip"/>
    <property type="match status" value="1"/>
</dbReference>
<dbReference type="Pfam" id="PF02535">
    <property type="entry name" value="Zip"/>
    <property type="match status" value="1"/>
</dbReference>
<dbReference type="Pfam" id="PF18292">
    <property type="entry name" value="ZIP4_domain"/>
    <property type="match status" value="1"/>
</dbReference>
<comment type="function">
    <text evidence="3 13 14 15 16 18 19 20 21 22 23">Selective transporter that mediates the uptake of Zn(2+) (PubMed:17202136, PubMed:22242765, PubMed:27321477, PubMed:28875161, PubMed:31164399, PubMed:31914589, PubMed:31979155, PubMed:33837739, PubMed:36473915). Plays an essential role for dietary zinc uptake from small intestine (By similarity). The Zn(2+) uniporter activity is regulated by zinc availability (PubMed:17202136, PubMed:32348750). Also exhibits polyspecific binding and transport of Cu(2+), Cd(2+) and possibly Ni(2+) but at higher concentrations (PubMed:22242765, PubMed:31914589).</text>
</comment>
<comment type="catalytic activity">
    <reaction evidence="13 14 15 16 18 19 20 22 23">
        <text>Zn(2+)(in) = Zn(2+)(out)</text>
        <dbReference type="Rhea" id="RHEA:29351"/>
        <dbReference type="ChEBI" id="CHEBI:29105"/>
    </reaction>
</comment>
<comment type="activity regulation">
    <text evidence="13 20 21">The Zn(2+) uniporter activity is regulated by zinc availability (PubMed:17202136, PubMed:32348750). Extracellular acidification stimulated SLC39A4-dependent Zn(2+) uptake (PubMed:31979155).</text>
</comment>
<comment type="biophysicochemical properties">
    <kinetics>
        <KM evidence="16">0.9 uM for Zn(2+)</KM>
        <KM evidence="15">2.2 uM for Zn(2+)</KM>
        <KM evidence="23">3.14 uM for Zn(2+)</KM>
        <KM evidence="19">2.5 uM for Zn(2+)</KM>
        <KM evidence="14">1.1 nM for Ni(2+)</KM>
    </kinetics>
    <phDependence>
        <text evidence="20">Optimum pH is 5.</text>
    </phDependence>
</comment>
<comment type="subunit">
    <text evidence="17 23">Homodimer; homodimerization is mediated by the transmembrane domain.</text>
</comment>
<comment type="subcellular location">
    <subcellularLocation>
        <location evidence="9 13 17 18 21 23">Cell membrane</location>
        <topology evidence="1">Multi-pass membrane protein</topology>
    </subcellularLocation>
    <subcellularLocation>
        <location evidence="9">Recycling endosome membrane</location>
        <topology evidence="1">Multi-pass membrane protein</topology>
    </subcellularLocation>
    <subcellularLocation>
        <location evidence="3">Apical cell membrane</location>
        <topology evidence="1">Multi-pass membrane protein</topology>
    </subcellularLocation>
    <text evidence="3 13 21">Colocalized with TFRC in the recycling endosomes. Cycles between endosomal compartments and the plasma membrane in response to Zn(2+) availability. Zn(2+) deficiency promotes accumulation of SLC39A4 on the surface membrane, whereas high extracellular Zn(2+) levels induce internalization of SLC39A4, but also trigger drastic removal of cellular SLC39A4 via proteasomal and lysosomal degradation pathways.</text>
</comment>
<comment type="alternative products">
    <event type="alternative splicing"/>
    <isoform>
        <id>Q6P5W5-1</id>
        <name>1</name>
        <sequence type="displayed"/>
    </isoform>
    <isoform>
        <id>Q6P5W5-2</id>
        <name>2</name>
        <sequence type="described" ref="VSP_015911 VSP_015912"/>
    </isoform>
</comment>
<comment type="tissue specificity">
    <text evidence="6 7">Highly expressed in kidney, small intestine, stomach, colon, jejunum and duodenum.</text>
</comment>
<comment type="domain">
    <text evidence="15">The N-terminal extracellular domain is required for high efficient zinc transport.</text>
</comment>
<comment type="domain">
    <text evidence="16 19 21">The two metal binding sites M1 and M2 that are halfway through the membrane form a binuclear metal center. M1 is essential to Zn(2+) transport, while the other, M2 appears to have an auxiliary role presumably by acting as an additional transport site that can modulate the properties of the primary transport site (PubMed:28875161, PubMed:31914589). The binuclear metal center plays a key role in Zn(2+) sensing (PubMed:32348750).</text>
</comment>
<comment type="PTM">
    <text evidence="3">The extracellular N-terminal ectodomain is cleaved when cells are Zn(2+) deficient, N-terminally cleaved SLC39A4 is internalized at a faster rate.</text>
</comment>
<comment type="PTM">
    <text evidence="13">Under excess Zn(2+) conditions, SLC39A4 on the cell surface is rapidly endocytosed, ubiquitinated and degraded.</text>
</comment>
<comment type="PTM">
    <text evidence="13 15 22">Glycosylated.</text>
</comment>
<comment type="disease" evidence="6 7 8 10 22">
    <disease id="DI-00027">
        <name>Acrodermatitis enteropathica, zinc-deficiency type</name>
        <acronym>AEZ</acronym>
        <description>A rare autosomal recessive disease caused by the inability to absorb sufficient zinc. The clinical features are growth retardation, immune-system dysfunction, alopecia, severe dermatitis, diarrhea and occasionally mental disorders.</description>
        <dbReference type="MIM" id="201100"/>
    </disease>
    <text>The disease is caused by variants affecting the gene represented in this entry.</text>
</comment>
<comment type="similarity">
    <text evidence="26">Belongs to the ZIP transporter (TC 2.A.5) family.</text>
</comment>
<comment type="sequence caution" evidence="26">
    <conflict type="frameshift">
        <sequence resource="EMBL-CDS" id="BAA91091"/>
    </conflict>
</comment>